<protein>
    <recommendedName>
        <fullName evidence="1">Photosystem I assembly protein Ycf4</fullName>
    </recommendedName>
</protein>
<comment type="function">
    <text evidence="1">Seems to be required for the assembly of the photosystem I complex.</text>
</comment>
<comment type="subcellular location">
    <subcellularLocation>
        <location evidence="1">Plastid</location>
        <location evidence="1">Chloroplast thylakoid membrane</location>
        <topology evidence="1">Multi-pass membrane protein</topology>
    </subcellularLocation>
</comment>
<comment type="similarity">
    <text evidence="1">Belongs to the Ycf4 family.</text>
</comment>
<geneLocation type="chloroplast"/>
<evidence type="ECO:0000255" key="1">
    <source>
        <dbReference type="HAMAP-Rule" id="MF_00437"/>
    </source>
</evidence>
<organism>
    <name type="scientific">Pleurastrum terricola</name>
    <name type="common">Filamentous green alga</name>
    <name type="synonym">Leptosira terrestris</name>
    <dbReference type="NCBI Taxonomy" id="34116"/>
    <lineage>
        <taxon>Eukaryota</taxon>
        <taxon>Viridiplantae</taxon>
        <taxon>Chlorophyta</taxon>
        <taxon>core chlorophytes</taxon>
        <taxon>Chlorophyceae</taxon>
        <taxon>CS clade</taxon>
        <taxon>Chlamydomonadales</taxon>
        <taxon>Pleurastraceae</taxon>
        <taxon>Pleurastrum</taxon>
    </lineage>
</organism>
<keyword id="KW-0150">Chloroplast</keyword>
<keyword id="KW-0472">Membrane</keyword>
<keyword id="KW-0602">Photosynthesis</keyword>
<keyword id="KW-0934">Plastid</keyword>
<keyword id="KW-0793">Thylakoid</keyword>
<keyword id="KW-0812">Transmembrane</keyword>
<keyword id="KW-1133">Transmembrane helix</keyword>
<proteinExistence type="inferred from homology"/>
<accession>A6YG74</accession>
<feature type="chain" id="PRO_0000326015" description="Photosystem I assembly protein Ycf4">
    <location>
        <begin position="1"/>
        <end position="312"/>
    </location>
</feature>
<feature type="transmembrane region" description="Helical" evidence="1">
    <location>
        <begin position="42"/>
        <end position="62"/>
    </location>
</feature>
<feature type="transmembrane region" description="Helical" evidence="1">
    <location>
        <begin position="91"/>
        <end position="111"/>
    </location>
</feature>
<feature type="transmembrane region" description="Helical" evidence="1">
    <location>
        <begin position="113"/>
        <end position="133"/>
    </location>
</feature>
<reference key="1">
    <citation type="journal article" date="2007" name="BMC Genomics">
        <title>The chloroplast genome sequence of the green alga Leptosira terrestris: multiple losses of the inverted repeat and extensive genome rearrangements within the Trebouxiophyceae.</title>
        <authorList>
            <person name="de Cambiaire J.-C."/>
            <person name="Otis C."/>
            <person name="Turmel M."/>
            <person name="Lemieux C."/>
        </authorList>
    </citation>
    <scope>NUCLEOTIDE SEQUENCE [LARGE SCALE GENOMIC DNA]</scope>
    <source>
        <strain>CCAP 463/2 / UTEX 333</strain>
    </source>
</reference>
<gene>
    <name evidence="1" type="primary">ycf4</name>
</gene>
<dbReference type="EMBL" id="EF506945">
    <property type="protein sequence ID" value="ABO69295.1"/>
    <property type="molecule type" value="Genomic_DNA"/>
</dbReference>
<dbReference type="RefSeq" id="YP_001382151.1">
    <property type="nucleotide sequence ID" value="NC_009681.1"/>
</dbReference>
<dbReference type="SMR" id="A6YG74"/>
<dbReference type="GeneID" id="5383798"/>
<dbReference type="GO" id="GO:0009535">
    <property type="term" value="C:chloroplast thylakoid membrane"/>
    <property type="evidence" value="ECO:0007669"/>
    <property type="project" value="UniProtKB-SubCell"/>
</dbReference>
<dbReference type="GO" id="GO:0009522">
    <property type="term" value="C:photosystem I"/>
    <property type="evidence" value="ECO:0007669"/>
    <property type="project" value="InterPro"/>
</dbReference>
<dbReference type="GO" id="GO:0015979">
    <property type="term" value="P:photosynthesis"/>
    <property type="evidence" value="ECO:0007669"/>
    <property type="project" value="UniProtKB-UniRule"/>
</dbReference>
<dbReference type="HAMAP" id="MF_00437">
    <property type="entry name" value="Ycf4"/>
    <property type="match status" value="1"/>
</dbReference>
<dbReference type="InterPro" id="IPR003359">
    <property type="entry name" value="PSI_Ycf4_assembly"/>
</dbReference>
<dbReference type="PANTHER" id="PTHR33288">
    <property type="match status" value="1"/>
</dbReference>
<dbReference type="PANTHER" id="PTHR33288:SF4">
    <property type="entry name" value="PHOTOSYSTEM I ASSEMBLY PROTEIN YCF4"/>
    <property type="match status" value="1"/>
</dbReference>
<dbReference type="Pfam" id="PF02392">
    <property type="entry name" value="Ycf4"/>
    <property type="match status" value="2"/>
</dbReference>
<name>YCF4_PLETE</name>
<sequence length="312" mass="35799">MNAEIVVNNSNFSSNTPPFLKKQPEIRRYIIQGSRRFSNYWWAFIVCLGSIGFLLTGISSYFEFQNLLHLQNYFSFANEAQSSLNKVELPIILFFPQGLVMCFYGILGLFLSFYLWFSIFLNIGAGFNEIYIYTGETLKTENQYSKSINSNNLKANNWNSSKIKSNLKKFTKMKDTQTIDYSSENELKNQLTNPNSAVCKFAKGGSEVGCWEQSALTPLPPTPLSHIRIFRWGFPGKNRKINLQYSIDQISAIKLEFLQGFNSKRTICLKLSDQREILLTGSPQGDWETFEQLEKQASELAKFLKVNLEFSS</sequence>